<dbReference type="EMBL" id="AL157959">
    <property type="status" value="NOT_ANNOTATED_CDS"/>
    <property type="molecule type" value="Genomic_DNA"/>
</dbReference>
<dbReference type="PIR" id="E81925">
    <property type="entry name" value="E81925"/>
</dbReference>
<dbReference type="RefSeq" id="WP_002214303.1">
    <property type="nucleotide sequence ID" value="NC_003116.1"/>
</dbReference>
<dbReference type="SMR" id="P66891"/>
<dbReference type="GeneID" id="93386569"/>
<dbReference type="Proteomes" id="UP000000626">
    <property type="component" value="Chromosome"/>
</dbReference>
<dbReference type="GO" id="GO:0033281">
    <property type="term" value="C:TAT protein transport complex"/>
    <property type="evidence" value="ECO:0007669"/>
    <property type="project" value="UniProtKB-UniRule"/>
</dbReference>
<dbReference type="GO" id="GO:0008320">
    <property type="term" value="F:protein transmembrane transporter activity"/>
    <property type="evidence" value="ECO:0007669"/>
    <property type="project" value="UniProtKB-UniRule"/>
</dbReference>
<dbReference type="GO" id="GO:0043953">
    <property type="term" value="P:protein transport by the Tat complex"/>
    <property type="evidence" value="ECO:0007669"/>
    <property type="project" value="UniProtKB-UniRule"/>
</dbReference>
<dbReference type="Gene3D" id="1.20.5.3310">
    <property type="match status" value="1"/>
</dbReference>
<dbReference type="HAMAP" id="MF_00236">
    <property type="entry name" value="TatA_E"/>
    <property type="match status" value="1"/>
</dbReference>
<dbReference type="InterPro" id="IPR003369">
    <property type="entry name" value="TatA/B/E"/>
</dbReference>
<dbReference type="InterPro" id="IPR006312">
    <property type="entry name" value="TatA/E"/>
</dbReference>
<dbReference type="NCBIfam" id="NF002813">
    <property type="entry name" value="PRK02958.1"/>
    <property type="match status" value="1"/>
</dbReference>
<dbReference type="NCBIfam" id="TIGR01411">
    <property type="entry name" value="tatAE"/>
    <property type="match status" value="1"/>
</dbReference>
<dbReference type="PANTHER" id="PTHR42982">
    <property type="entry name" value="SEC-INDEPENDENT PROTEIN TRANSLOCASE PROTEIN TATA"/>
    <property type="match status" value="1"/>
</dbReference>
<dbReference type="PANTHER" id="PTHR42982:SF1">
    <property type="entry name" value="SEC-INDEPENDENT PROTEIN TRANSLOCASE PROTEIN TATA"/>
    <property type="match status" value="1"/>
</dbReference>
<dbReference type="Pfam" id="PF02416">
    <property type="entry name" value="TatA_B_E"/>
    <property type="match status" value="1"/>
</dbReference>
<sequence>MGSFSLTHWIIVLIIVVLIFGTKKLRNVGKDLGGAVHDFKQGLNEGTDGKEAQKDDVIEHKKDEDKA</sequence>
<organism>
    <name type="scientific">Neisseria meningitidis serogroup A / serotype 4A (strain DSM 15465 / Z2491)</name>
    <dbReference type="NCBI Taxonomy" id="122587"/>
    <lineage>
        <taxon>Bacteria</taxon>
        <taxon>Pseudomonadati</taxon>
        <taxon>Pseudomonadota</taxon>
        <taxon>Betaproteobacteria</taxon>
        <taxon>Neisseriales</taxon>
        <taxon>Neisseriaceae</taxon>
        <taxon>Neisseria</taxon>
    </lineage>
</organism>
<reference key="1">
    <citation type="journal article" date="2000" name="Nature">
        <title>Complete DNA sequence of a serogroup A strain of Neisseria meningitidis Z2491.</title>
        <authorList>
            <person name="Parkhill J."/>
            <person name="Achtman M."/>
            <person name="James K.D."/>
            <person name="Bentley S.D."/>
            <person name="Churcher C.M."/>
            <person name="Klee S.R."/>
            <person name="Morelli G."/>
            <person name="Basham D."/>
            <person name="Brown D."/>
            <person name="Chillingworth T."/>
            <person name="Davies R.M."/>
            <person name="Davis P."/>
            <person name="Devlin K."/>
            <person name="Feltwell T."/>
            <person name="Hamlin N."/>
            <person name="Holroyd S."/>
            <person name="Jagels K."/>
            <person name="Leather S."/>
            <person name="Moule S."/>
            <person name="Mungall K.L."/>
            <person name="Quail M.A."/>
            <person name="Rajandream M.A."/>
            <person name="Rutherford K.M."/>
            <person name="Simmonds M."/>
            <person name="Skelton J."/>
            <person name="Whitehead S."/>
            <person name="Spratt B.G."/>
            <person name="Barrell B.G."/>
        </authorList>
    </citation>
    <scope>NUCLEOTIDE SEQUENCE [LARGE SCALE GENOMIC DNA]</scope>
    <source>
        <strain>DSM 15465 / Z2491</strain>
    </source>
</reference>
<comment type="function">
    <text evidence="1">Part of the twin-arginine translocation (Tat) system that transports large folded proteins containing a characteristic twin-arginine motif in their signal peptide across membranes. TatA could form the protein-conducting channel of the Tat system.</text>
</comment>
<comment type="subunit">
    <text evidence="1">The Tat system comprises two distinct complexes: a TatABC complex, containing multiple copies of TatA, TatB and TatC subunits, and a separate TatA complex, containing only TatA subunits. Substrates initially bind to the TatABC complex, which probably triggers association of the separate TatA complex to form the active translocon.</text>
</comment>
<comment type="subcellular location">
    <subcellularLocation>
        <location evidence="1">Cell inner membrane</location>
        <topology evidence="1">Single-pass membrane protein</topology>
    </subcellularLocation>
</comment>
<comment type="similarity">
    <text evidence="1">Belongs to the TatA/E family.</text>
</comment>
<name>TATA_NEIMA</name>
<keyword id="KW-0997">Cell inner membrane</keyword>
<keyword id="KW-1003">Cell membrane</keyword>
<keyword id="KW-0472">Membrane</keyword>
<keyword id="KW-0653">Protein transport</keyword>
<keyword id="KW-0811">Translocation</keyword>
<keyword id="KW-0812">Transmembrane</keyword>
<keyword id="KW-1133">Transmembrane helix</keyword>
<keyword id="KW-0813">Transport</keyword>
<evidence type="ECO:0000255" key="1">
    <source>
        <dbReference type="HAMAP-Rule" id="MF_00236"/>
    </source>
</evidence>
<evidence type="ECO:0000256" key="2">
    <source>
        <dbReference type="SAM" id="MobiDB-lite"/>
    </source>
</evidence>
<gene>
    <name evidence="1" type="primary">tatA</name>
    <name type="ordered locus">NMA0805</name>
</gene>
<proteinExistence type="inferred from homology"/>
<protein>
    <recommendedName>
        <fullName evidence="1">Sec-independent protein translocase protein TatA</fullName>
    </recommendedName>
</protein>
<feature type="chain" id="PRO_0000097947" description="Sec-independent protein translocase protein TatA">
    <location>
        <begin position="1"/>
        <end position="67"/>
    </location>
</feature>
<feature type="transmembrane region" description="Helical" evidence="1">
    <location>
        <begin position="1"/>
        <end position="21"/>
    </location>
</feature>
<feature type="region of interest" description="Disordered" evidence="2">
    <location>
        <begin position="43"/>
        <end position="67"/>
    </location>
</feature>
<feature type="compositionally biased region" description="Basic and acidic residues" evidence="2">
    <location>
        <begin position="47"/>
        <end position="67"/>
    </location>
</feature>
<accession>P66891</accession>
<accession>P57049</accession>